<protein>
    <recommendedName>
        <fullName evidence="1">UDP-N-acetylmuramate--L-alanine ligase</fullName>
        <ecNumber evidence="1">6.3.2.8</ecNumber>
    </recommendedName>
    <alternativeName>
        <fullName evidence="1">UDP-N-acetylmuramoyl-L-alanine synthetase</fullName>
    </alternativeName>
</protein>
<feature type="chain" id="PRO_1000091124" description="UDP-N-acetylmuramate--L-alanine ligase">
    <location>
        <begin position="1"/>
        <end position="482"/>
    </location>
</feature>
<feature type="binding site" evidence="1">
    <location>
        <begin position="123"/>
        <end position="129"/>
    </location>
    <ligand>
        <name>ATP</name>
        <dbReference type="ChEBI" id="CHEBI:30616"/>
    </ligand>
</feature>
<evidence type="ECO:0000255" key="1">
    <source>
        <dbReference type="HAMAP-Rule" id="MF_00046"/>
    </source>
</evidence>
<sequence>MVESQKAMPQPKMGRIHRIHFVGIGGVGMCGIAEVLLNLGYEVSGSDLKVSPVTQRLESFGAEIFVGHRAENAAHADVLVVSSAINPANPEVATALERRIPVVPRAEMLAELMRYRHGVAVAGTHGKTTTTSLLASVFAAGGLDPTFVIGGRLTAAGTNAQLGTSRYLIAEADESDASFLHLQPMVAVVTNIDADHMATYEGDFNKLKKTFVEFLHNLPFYGLAVMCLDDPVVREILPQVKRPTVTYGFCEEADIRAINVSQKGMQTHFTVLRRDREPLEVSVNMPGNHNVLNALATIAIATDEGISDEAIVQGLSGFQGVGRRFQVYGELPVEGGSVMLVDDYGHHPTEVAAVIKAVRGGWPSRRLVIVYQPHRYSRTRDLYDDFVQVLGDANVLLLMEVYPAGEEPIPGADSRQLCHSIRQRGKLDPIYIERGAELAPLVKPLLRAGDILLCQGAGDVGGLAPQLMKSPLFAGAKQEKSK</sequence>
<dbReference type="EC" id="6.3.2.8" evidence="1"/>
<dbReference type="EMBL" id="CP000949">
    <property type="protein sequence ID" value="ACA71450.1"/>
    <property type="molecule type" value="Genomic_DNA"/>
</dbReference>
<dbReference type="SMR" id="B1J3L3"/>
<dbReference type="STRING" id="390235.PputW619_0945"/>
<dbReference type="KEGG" id="ppw:PputW619_0945"/>
<dbReference type="eggNOG" id="COG0773">
    <property type="taxonomic scope" value="Bacteria"/>
</dbReference>
<dbReference type="HOGENOM" id="CLU_028104_2_2_6"/>
<dbReference type="OrthoDB" id="9804126at2"/>
<dbReference type="UniPathway" id="UPA00219"/>
<dbReference type="GO" id="GO:0005737">
    <property type="term" value="C:cytoplasm"/>
    <property type="evidence" value="ECO:0007669"/>
    <property type="project" value="UniProtKB-SubCell"/>
</dbReference>
<dbReference type="GO" id="GO:0005524">
    <property type="term" value="F:ATP binding"/>
    <property type="evidence" value="ECO:0007669"/>
    <property type="project" value="UniProtKB-UniRule"/>
</dbReference>
<dbReference type="GO" id="GO:0008763">
    <property type="term" value="F:UDP-N-acetylmuramate-L-alanine ligase activity"/>
    <property type="evidence" value="ECO:0007669"/>
    <property type="project" value="UniProtKB-UniRule"/>
</dbReference>
<dbReference type="GO" id="GO:0051301">
    <property type="term" value="P:cell division"/>
    <property type="evidence" value="ECO:0007669"/>
    <property type="project" value="UniProtKB-KW"/>
</dbReference>
<dbReference type="GO" id="GO:0071555">
    <property type="term" value="P:cell wall organization"/>
    <property type="evidence" value="ECO:0007669"/>
    <property type="project" value="UniProtKB-KW"/>
</dbReference>
<dbReference type="GO" id="GO:0009252">
    <property type="term" value="P:peptidoglycan biosynthetic process"/>
    <property type="evidence" value="ECO:0007669"/>
    <property type="project" value="UniProtKB-UniRule"/>
</dbReference>
<dbReference type="GO" id="GO:0008360">
    <property type="term" value="P:regulation of cell shape"/>
    <property type="evidence" value="ECO:0007669"/>
    <property type="project" value="UniProtKB-KW"/>
</dbReference>
<dbReference type="FunFam" id="3.40.1190.10:FF:000001">
    <property type="entry name" value="UDP-N-acetylmuramate--L-alanine ligase"/>
    <property type="match status" value="1"/>
</dbReference>
<dbReference type="Gene3D" id="3.90.190.20">
    <property type="entry name" value="Mur ligase, C-terminal domain"/>
    <property type="match status" value="1"/>
</dbReference>
<dbReference type="Gene3D" id="3.40.1190.10">
    <property type="entry name" value="Mur-like, catalytic domain"/>
    <property type="match status" value="1"/>
</dbReference>
<dbReference type="Gene3D" id="3.40.50.720">
    <property type="entry name" value="NAD(P)-binding Rossmann-like Domain"/>
    <property type="match status" value="1"/>
</dbReference>
<dbReference type="HAMAP" id="MF_00046">
    <property type="entry name" value="MurC"/>
    <property type="match status" value="1"/>
</dbReference>
<dbReference type="InterPro" id="IPR036565">
    <property type="entry name" value="Mur-like_cat_sf"/>
</dbReference>
<dbReference type="InterPro" id="IPR004101">
    <property type="entry name" value="Mur_ligase_C"/>
</dbReference>
<dbReference type="InterPro" id="IPR036615">
    <property type="entry name" value="Mur_ligase_C_dom_sf"/>
</dbReference>
<dbReference type="InterPro" id="IPR013221">
    <property type="entry name" value="Mur_ligase_cen"/>
</dbReference>
<dbReference type="InterPro" id="IPR000713">
    <property type="entry name" value="Mur_ligase_N"/>
</dbReference>
<dbReference type="InterPro" id="IPR050061">
    <property type="entry name" value="MurCDEF_pg_biosynth"/>
</dbReference>
<dbReference type="InterPro" id="IPR005758">
    <property type="entry name" value="UDP-N-AcMur_Ala_ligase_MurC"/>
</dbReference>
<dbReference type="NCBIfam" id="TIGR01082">
    <property type="entry name" value="murC"/>
    <property type="match status" value="1"/>
</dbReference>
<dbReference type="PANTHER" id="PTHR43445:SF3">
    <property type="entry name" value="UDP-N-ACETYLMURAMATE--L-ALANINE LIGASE"/>
    <property type="match status" value="1"/>
</dbReference>
<dbReference type="PANTHER" id="PTHR43445">
    <property type="entry name" value="UDP-N-ACETYLMURAMATE--L-ALANINE LIGASE-RELATED"/>
    <property type="match status" value="1"/>
</dbReference>
<dbReference type="Pfam" id="PF01225">
    <property type="entry name" value="Mur_ligase"/>
    <property type="match status" value="1"/>
</dbReference>
<dbReference type="Pfam" id="PF02875">
    <property type="entry name" value="Mur_ligase_C"/>
    <property type="match status" value="1"/>
</dbReference>
<dbReference type="Pfam" id="PF08245">
    <property type="entry name" value="Mur_ligase_M"/>
    <property type="match status" value="1"/>
</dbReference>
<dbReference type="SUPFAM" id="SSF51984">
    <property type="entry name" value="MurCD N-terminal domain"/>
    <property type="match status" value="1"/>
</dbReference>
<dbReference type="SUPFAM" id="SSF53623">
    <property type="entry name" value="MurD-like peptide ligases, catalytic domain"/>
    <property type="match status" value="1"/>
</dbReference>
<dbReference type="SUPFAM" id="SSF53244">
    <property type="entry name" value="MurD-like peptide ligases, peptide-binding domain"/>
    <property type="match status" value="1"/>
</dbReference>
<reference key="1">
    <citation type="submission" date="2008-02" db="EMBL/GenBank/DDBJ databases">
        <title>Complete sequence of Pseudomonas putida W619.</title>
        <authorList>
            <person name="Copeland A."/>
            <person name="Lucas S."/>
            <person name="Lapidus A."/>
            <person name="Barry K."/>
            <person name="Detter J.C."/>
            <person name="Glavina del Rio T."/>
            <person name="Dalin E."/>
            <person name="Tice H."/>
            <person name="Pitluck S."/>
            <person name="Chain P."/>
            <person name="Malfatti S."/>
            <person name="Shin M."/>
            <person name="Vergez L."/>
            <person name="Schmutz J."/>
            <person name="Larimer F."/>
            <person name="Land M."/>
            <person name="Hauser L."/>
            <person name="Kyrpides N."/>
            <person name="Kim E."/>
            <person name="Taghavi S."/>
            <person name="Vangronsveld D."/>
            <person name="van der Lelie D."/>
            <person name="Richardson P."/>
        </authorList>
    </citation>
    <scope>NUCLEOTIDE SEQUENCE [LARGE SCALE GENOMIC DNA]</scope>
    <source>
        <strain>W619</strain>
    </source>
</reference>
<accession>B1J3L3</accession>
<keyword id="KW-0067">ATP-binding</keyword>
<keyword id="KW-0131">Cell cycle</keyword>
<keyword id="KW-0132">Cell division</keyword>
<keyword id="KW-0133">Cell shape</keyword>
<keyword id="KW-0961">Cell wall biogenesis/degradation</keyword>
<keyword id="KW-0963">Cytoplasm</keyword>
<keyword id="KW-0436">Ligase</keyword>
<keyword id="KW-0547">Nucleotide-binding</keyword>
<keyword id="KW-0573">Peptidoglycan synthesis</keyword>
<organism>
    <name type="scientific">Pseudomonas putida (strain W619)</name>
    <dbReference type="NCBI Taxonomy" id="390235"/>
    <lineage>
        <taxon>Bacteria</taxon>
        <taxon>Pseudomonadati</taxon>
        <taxon>Pseudomonadota</taxon>
        <taxon>Gammaproteobacteria</taxon>
        <taxon>Pseudomonadales</taxon>
        <taxon>Pseudomonadaceae</taxon>
        <taxon>Pseudomonas</taxon>
    </lineage>
</organism>
<proteinExistence type="inferred from homology"/>
<name>MURC_PSEPW</name>
<comment type="function">
    <text evidence="1">Cell wall formation.</text>
</comment>
<comment type="catalytic activity">
    <reaction evidence="1">
        <text>UDP-N-acetyl-alpha-D-muramate + L-alanine + ATP = UDP-N-acetyl-alpha-D-muramoyl-L-alanine + ADP + phosphate + H(+)</text>
        <dbReference type="Rhea" id="RHEA:23372"/>
        <dbReference type="ChEBI" id="CHEBI:15378"/>
        <dbReference type="ChEBI" id="CHEBI:30616"/>
        <dbReference type="ChEBI" id="CHEBI:43474"/>
        <dbReference type="ChEBI" id="CHEBI:57972"/>
        <dbReference type="ChEBI" id="CHEBI:70757"/>
        <dbReference type="ChEBI" id="CHEBI:83898"/>
        <dbReference type="ChEBI" id="CHEBI:456216"/>
        <dbReference type="EC" id="6.3.2.8"/>
    </reaction>
</comment>
<comment type="pathway">
    <text evidence="1">Cell wall biogenesis; peptidoglycan biosynthesis.</text>
</comment>
<comment type="subcellular location">
    <subcellularLocation>
        <location evidence="1">Cytoplasm</location>
    </subcellularLocation>
</comment>
<comment type="similarity">
    <text evidence="1">Belongs to the MurCDEF family.</text>
</comment>
<gene>
    <name evidence="1" type="primary">murC</name>
    <name type="ordered locus">PputW619_0945</name>
</gene>